<name>ADHB_MYCBO</name>
<protein>
    <recommendedName>
        <fullName>Alcohol dehydrogenase B</fullName>
        <ecNumber>1.1.1.1</ecNumber>
    </recommendedName>
</protein>
<accession>Q7U1B9</accession>
<accession>A0A1R3XXB9</accession>
<accession>X2BG32</accession>
<feature type="chain" id="PRO_0000160742" description="Alcohol dehydrogenase B">
    <location>
        <begin position="1"/>
        <end position="375"/>
    </location>
</feature>
<feature type="binding site" evidence="1">
    <location>
        <position position="40"/>
    </location>
    <ligand>
        <name>Zn(2+)</name>
        <dbReference type="ChEBI" id="CHEBI:29105"/>
        <label>1</label>
        <note>catalytic</note>
    </ligand>
</feature>
<feature type="binding site" evidence="1">
    <location>
        <position position="62"/>
    </location>
    <ligand>
        <name>Zn(2+)</name>
        <dbReference type="ChEBI" id="CHEBI:29105"/>
        <label>1</label>
        <note>catalytic</note>
    </ligand>
</feature>
<feature type="binding site" evidence="1">
    <location>
        <position position="92"/>
    </location>
    <ligand>
        <name>Zn(2+)</name>
        <dbReference type="ChEBI" id="CHEBI:29105"/>
        <label>2</label>
    </ligand>
</feature>
<feature type="binding site" evidence="1">
    <location>
        <position position="95"/>
    </location>
    <ligand>
        <name>Zn(2+)</name>
        <dbReference type="ChEBI" id="CHEBI:29105"/>
        <label>2</label>
    </ligand>
</feature>
<feature type="binding site" evidence="1">
    <location>
        <position position="98"/>
    </location>
    <ligand>
        <name>Zn(2+)</name>
        <dbReference type="ChEBI" id="CHEBI:29105"/>
        <label>2</label>
    </ligand>
</feature>
<feature type="binding site" evidence="1">
    <location>
        <position position="106"/>
    </location>
    <ligand>
        <name>Zn(2+)</name>
        <dbReference type="ChEBI" id="CHEBI:29105"/>
        <label>2</label>
    </ligand>
</feature>
<feature type="binding site" evidence="1">
    <location>
        <position position="169"/>
    </location>
    <ligand>
        <name>Zn(2+)</name>
        <dbReference type="ChEBI" id="CHEBI:29105"/>
        <label>1</label>
        <note>catalytic</note>
    </ligand>
</feature>
<proteinExistence type="inferred from homology"/>
<organism>
    <name type="scientific">Mycobacterium bovis (strain ATCC BAA-935 / AF2122/97)</name>
    <dbReference type="NCBI Taxonomy" id="233413"/>
    <lineage>
        <taxon>Bacteria</taxon>
        <taxon>Bacillati</taxon>
        <taxon>Actinomycetota</taxon>
        <taxon>Actinomycetes</taxon>
        <taxon>Mycobacteriales</taxon>
        <taxon>Mycobacteriaceae</taxon>
        <taxon>Mycobacterium</taxon>
        <taxon>Mycobacterium tuberculosis complex</taxon>
    </lineage>
</organism>
<comment type="catalytic activity">
    <reaction>
        <text>a primary alcohol + NAD(+) = an aldehyde + NADH + H(+)</text>
        <dbReference type="Rhea" id="RHEA:10736"/>
        <dbReference type="ChEBI" id="CHEBI:15378"/>
        <dbReference type="ChEBI" id="CHEBI:15734"/>
        <dbReference type="ChEBI" id="CHEBI:17478"/>
        <dbReference type="ChEBI" id="CHEBI:57540"/>
        <dbReference type="ChEBI" id="CHEBI:57945"/>
        <dbReference type="EC" id="1.1.1.1"/>
    </reaction>
</comment>
<comment type="catalytic activity">
    <reaction>
        <text>a secondary alcohol + NAD(+) = a ketone + NADH + H(+)</text>
        <dbReference type="Rhea" id="RHEA:10740"/>
        <dbReference type="ChEBI" id="CHEBI:15378"/>
        <dbReference type="ChEBI" id="CHEBI:17087"/>
        <dbReference type="ChEBI" id="CHEBI:35681"/>
        <dbReference type="ChEBI" id="CHEBI:57540"/>
        <dbReference type="ChEBI" id="CHEBI:57945"/>
        <dbReference type="EC" id="1.1.1.1"/>
    </reaction>
</comment>
<comment type="cofactor">
    <cofactor evidence="1">
        <name>Zn(2+)</name>
        <dbReference type="ChEBI" id="CHEBI:29105"/>
    </cofactor>
    <text evidence="1">Binds 2 Zn(2+) ions per subunit.</text>
</comment>
<comment type="subcellular location">
    <subcellularLocation>
        <location evidence="1">Cytoplasm</location>
    </subcellularLocation>
</comment>
<comment type="similarity">
    <text evidence="2">Belongs to the zinc-containing alcohol dehydrogenase family.</text>
</comment>
<sequence>MKTKGALIWEFNQPWSVEEIEIGDPRKDEVKIQMEAAGMCRSDHHLVTGDIPMAGFPVLGGHEGAGIVTEVGPGVDDFAPGDHVVLAFIPSCGKCPSCQAGMRNLCDLGAGLLAGESVTDGSFRIQARGQNVYPMTLLGTFSPYMVVHRSSVVKIDPSVPFEVACLVGCGVTTGYGSAVRTADVRPGDDVAIVGLGGVGMAALQGAVSAGARYVFAVEPVEWKRDQALKFGATHVYPDINAALMGIAEVTYGLMAQKVIITVGKLDGADVDSYLTITAKGGTCVLTAIGSLVDTQVTLNLAMLTLLQKNIQGTIFGGGNPHYDIPKLLSMYKAGKLNLDDMVTTAYKLEQINDGYQDMLNGKNIRGVIRYTDDDR</sequence>
<dbReference type="EC" id="1.1.1.1"/>
<dbReference type="EMBL" id="LT708304">
    <property type="protein sequence ID" value="SIT99383.1"/>
    <property type="molecule type" value="Genomic_DNA"/>
</dbReference>
<dbReference type="RefSeq" id="NP_854442.1">
    <property type="nucleotide sequence ID" value="NC_002945.3"/>
</dbReference>
<dbReference type="RefSeq" id="WP_003403885.1">
    <property type="nucleotide sequence ID" value="NC_002945.4"/>
</dbReference>
<dbReference type="SMR" id="Q7U1B9"/>
<dbReference type="KEGG" id="mbo:BQ2027_MB0784C"/>
<dbReference type="PATRIC" id="fig|233413.5.peg.854"/>
<dbReference type="Proteomes" id="UP000001419">
    <property type="component" value="Chromosome"/>
</dbReference>
<dbReference type="GO" id="GO:0005829">
    <property type="term" value="C:cytosol"/>
    <property type="evidence" value="ECO:0007669"/>
    <property type="project" value="TreeGrafter"/>
</dbReference>
<dbReference type="GO" id="GO:0004022">
    <property type="term" value="F:alcohol dehydrogenase (NAD+) activity"/>
    <property type="evidence" value="ECO:0007669"/>
    <property type="project" value="UniProtKB-EC"/>
</dbReference>
<dbReference type="GO" id="GO:0051903">
    <property type="term" value="F:S-(hydroxymethyl)glutathione dehydrogenase [NAD(P)+] activity"/>
    <property type="evidence" value="ECO:0007669"/>
    <property type="project" value="TreeGrafter"/>
</dbReference>
<dbReference type="GO" id="GO:0008270">
    <property type="term" value="F:zinc ion binding"/>
    <property type="evidence" value="ECO:0007669"/>
    <property type="project" value="InterPro"/>
</dbReference>
<dbReference type="GO" id="GO:0046294">
    <property type="term" value="P:formaldehyde catabolic process"/>
    <property type="evidence" value="ECO:0007669"/>
    <property type="project" value="TreeGrafter"/>
</dbReference>
<dbReference type="CDD" id="cd08279">
    <property type="entry name" value="Zn_ADH_class_III"/>
    <property type="match status" value="1"/>
</dbReference>
<dbReference type="Gene3D" id="3.90.180.10">
    <property type="entry name" value="Medium-chain alcohol dehydrogenases, catalytic domain"/>
    <property type="match status" value="1"/>
</dbReference>
<dbReference type="Gene3D" id="3.40.50.720">
    <property type="entry name" value="NAD(P)-binding Rossmann-like Domain"/>
    <property type="match status" value="1"/>
</dbReference>
<dbReference type="InterPro" id="IPR013149">
    <property type="entry name" value="ADH-like_C"/>
</dbReference>
<dbReference type="InterPro" id="IPR013154">
    <property type="entry name" value="ADH-like_N"/>
</dbReference>
<dbReference type="InterPro" id="IPR023921">
    <property type="entry name" value="ADH_Zn_actinomycetes"/>
</dbReference>
<dbReference type="InterPro" id="IPR002328">
    <property type="entry name" value="ADH_Zn_CS"/>
</dbReference>
<dbReference type="InterPro" id="IPR011032">
    <property type="entry name" value="GroES-like_sf"/>
</dbReference>
<dbReference type="InterPro" id="IPR036291">
    <property type="entry name" value="NAD(P)-bd_dom_sf"/>
</dbReference>
<dbReference type="InterPro" id="IPR020843">
    <property type="entry name" value="PKS_ER"/>
</dbReference>
<dbReference type="NCBIfam" id="TIGR03989">
    <property type="entry name" value="Rxyl_3153"/>
    <property type="match status" value="1"/>
</dbReference>
<dbReference type="PANTHER" id="PTHR43880">
    <property type="entry name" value="ALCOHOL DEHYDROGENASE"/>
    <property type="match status" value="1"/>
</dbReference>
<dbReference type="PANTHER" id="PTHR43880:SF12">
    <property type="entry name" value="ALCOHOL DEHYDROGENASE CLASS-3"/>
    <property type="match status" value="1"/>
</dbReference>
<dbReference type="Pfam" id="PF08240">
    <property type="entry name" value="ADH_N"/>
    <property type="match status" value="1"/>
</dbReference>
<dbReference type="Pfam" id="PF00107">
    <property type="entry name" value="ADH_zinc_N"/>
    <property type="match status" value="1"/>
</dbReference>
<dbReference type="SMART" id="SM00829">
    <property type="entry name" value="PKS_ER"/>
    <property type="match status" value="1"/>
</dbReference>
<dbReference type="SUPFAM" id="SSF50129">
    <property type="entry name" value="GroES-like"/>
    <property type="match status" value="2"/>
</dbReference>
<dbReference type="SUPFAM" id="SSF51735">
    <property type="entry name" value="NAD(P)-binding Rossmann-fold domains"/>
    <property type="match status" value="1"/>
</dbReference>
<dbReference type="PROSITE" id="PS00059">
    <property type="entry name" value="ADH_ZINC"/>
    <property type="match status" value="1"/>
</dbReference>
<gene>
    <name type="primary">adhB</name>
    <name type="ordered locus">BQ2027_MB0784C</name>
</gene>
<reference key="1">
    <citation type="journal article" date="2003" name="Proc. Natl. Acad. Sci. U.S.A.">
        <title>The complete genome sequence of Mycobacterium bovis.</title>
        <authorList>
            <person name="Garnier T."/>
            <person name="Eiglmeier K."/>
            <person name="Camus J.-C."/>
            <person name="Medina N."/>
            <person name="Mansoor H."/>
            <person name="Pryor M."/>
            <person name="Duthoy S."/>
            <person name="Grondin S."/>
            <person name="Lacroix C."/>
            <person name="Monsempe C."/>
            <person name="Simon S."/>
            <person name="Harris B."/>
            <person name="Atkin R."/>
            <person name="Doggett J."/>
            <person name="Mayes R."/>
            <person name="Keating L."/>
            <person name="Wheeler P.R."/>
            <person name="Parkhill J."/>
            <person name="Barrell B.G."/>
            <person name="Cole S.T."/>
            <person name="Gordon S.V."/>
            <person name="Hewinson R.G."/>
        </authorList>
    </citation>
    <scope>NUCLEOTIDE SEQUENCE [LARGE SCALE GENOMIC DNA]</scope>
    <source>
        <strain>ATCC BAA-935 / AF2122/97</strain>
    </source>
</reference>
<reference key="2">
    <citation type="journal article" date="2017" name="Genome Announc.">
        <title>Updated reference genome sequence and annotation of Mycobacterium bovis AF2122/97.</title>
        <authorList>
            <person name="Malone K.M."/>
            <person name="Farrell D."/>
            <person name="Stuber T.P."/>
            <person name="Schubert O.T."/>
            <person name="Aebersold R."/>
            <person name="Robbe-Austerman S."/>
            <person name="Gordon S.V."/>
        </authorList>
    </citation>
    <scope>NUCLEOTIDE SEQUENCE [LARGE SCALE GENOMIC DNA]</scope>
    <scope>GENOME REANNOTATION</scope>
    <source>
        <strain>ATCC BAA-935 / AF2122/97</strain>
    </source>
</reference>
<evidence type="ECO:0000250" key="1"/>
<evidence type="ECO:0000305" key="2"/>
<keyword id="KW-0963">Cytoplasm</keyword>
<keyword id="KW-0479">Metal-binding</keyword>
<keyword id="KW-0520">NAD</keyword>
<keyword id="KW-0560">Oxidoreductase</keyword>
<keyword id="KW-1185">Reference proteome</keyword>
<keyword id="KW-0862">Zinc</keyword>